<proteinExistence type="inferred from homology"/>
<comment type="function">
    <text evidence="1">Catalyzes the last two steps in the biosynthesis of 5-methylaminomethyl-2-thiouridine (mnm(5)s(2)U) at the wobble position (U34) in tRNA. Catalyzes the FAD-dependent demodification of cmnm(5)s(2)U34 to nm(5)s(2)U34, followed by the transfer of a methyl group from S-adenosyl-L-methionine to nm(5)s(2)U34, to form mnm(5)s(2)U34.</text>
</comment>
<comment type="catalytic activity">
    <reaction evidence="1">
        <text>5-aminomethyl-2-thiouridine(34) in tRNA + S-adenosyl-L-methionine = 5-methylaminomethyl-2-thiouridine(34) in tRNA + S-adenosyl-L-homocysteine + H(+)</text>
        <dbReference type="Rhea" id="RHEA:19569"/>
        <dbReference type="Rhea" id="RHEA-COMP:10195"/>
        <dbReference type="Rhea" id="RHEA-COMP:10197"/>
        <dbReference type="ChEBI" id="CHEBI:15378"/>
        <dbReference type="ChEBI" id="CHEBI:57856"/>
        <dbReference type="ChEBI" id="CHEBI:59789"/>
        <dbReference type="ChEBI" id="CHEBI:74454"/>
        <dbReference type="ChEBI" id="CHEBI:74455"/>
        <dbReference type="EC" id="2.1.1.61"/>
    </reaction>
</comment>
<comment type="cofactor">
    <cofactor evidence="1">
        <name>FAD</name>
        <dbReference type="ChEBI" id="CHEBI:57692"/>
    </cofactor>
</comment>
<comment type="subcellular location">
    <subcellularLocation>
        <location evidence="1">Cytoplasm</location>
    </subcellularLocation>
</comment>
<comment type="similarity">
    <text evidence="1">In the N-terminal section; belongs to the methyltransferase superfamily. tRNA (mnm(5)s(2)U34)-methyltransferase family.</text>
</comment>
<comment type="similarity">
    <text evidence="1">In the C-terminal section; belongs to the DAO family.</text>
</comment>
<dbReference type="EC" id="2.1.1.61" evidence="1"/>
<dbReference type="EC" id="1.5.-.-" evidence="1"/>
<dbReference type="EMBL" id="CP000687">
    <property type="protein sequence ID" value="ABY69427.1"/>
    <property type="molecule type" value="Genomic_DNA"/>
</dbReference>
<dbReference type="SMR" id="B0BPE2"/>
<dbReference type="KEGG" id="apj:APJL_0869"/>
<dbReference type="HOGENOM" id="CLU_022427_2_1_6"/>
<dbReference type="Proteomes" id="UP000008547">
    <property type="component" value="Chromosome"/>
</dbReference>
<dbReference type="GO" id="GO:0005737">
    <property type="term" value="C:cytoplasm"/>
    <property type="evidence" value="ECO:0007669"/>
    <property type="project" value="UniProtKB-SubCell"/>
</dbReference>
<dbReference type="GO" id="GO:0050660">
    <property type="term" value="F:flavin adenine dinucleotide binding"/>
    <property type="evidence" value="ECO:0007669"/>
    <property type="project" value="UniProtKB-UniRule"/>
</dbReference>
<dbReference type="GO" id="GO:0016645">
    <property type="term" value="F:oxidoreductase activity, acting on the CH-NH group of donors"/>
    <property type="evidence" value="ECO:0007669"/>
    <property type="project" value="InterPro"/>
</dbReference>
<dbReference type="GO" id="GO:0004808">
    <property type="term" value="F:tRNA (5-methylaminomethyl-2-thiouridylate)(34)-methyltransferase activity"/>
    <property type="evidence" value="ECO:0007669"/>
    <property type="project" value="UniProtKB-EC"/>
</dbReference>
<dbReference type="GO" id="GO:0032259">
    <property type="term" value="P:methylation"/>
    <property type="evidence" value="ECO:0007669"/>
    <property type="project" value="UniProtKB-KW"/>
</dbReference>
<dbReference type="GO" id="GO:0002098">
    <property type="term" value="P:tRNA wobble uridine modification"/>
    <property type="evidence" value="ECO:0007669"/>
    <property type="project" value="TreeGrafter"/>
</dbReference>
<dbReference type="Gene3D" id="3.30.9.10">
    <property type="entry name" value="D-Amino Acid Oxidase, subunit A, domain 2"/>
    <property type="match status" value="1"/>
</dbReference>
<dbReference type="Gene3D" id="3.50.50.60">
    <property type="entry name" value="FAD/NAD(P)-binding domain"/>
    <property type="match status" value="1"/>
</dbReference>
<dbReference type="Gene3D" id="3.40.50.150">
    <property type="entry name" value="Vaccinia Virus protein VP39"/>
    <property type="match status" value="1"/>
</dbReference>
<dbReference type="HAMAP" id="MF_01102">
    <property type="entry name" value="MnmC"/>
    <property type="match status" value="1"/>
</dbReference>
<dbReference type="InterPro" id="IPR006076">
    <property type="entry name" value="FAD-dep_OxRdtase"/>
</dbReference>
<dbReference type="InterPro" id="IPR036188">
    <property type="entry name" value="FAD/NAD-bd_sf"/>
</dbReference>
<dbReference type="InterPro" id="IPR008471">
    <property type="entry name" value="MnmC-like_methylTransf"/>
</dbReference>
<dbReference type="InterPro" id="IPR029063">
    <property type="entry name" value="SAM-dependent_MTases_sf"/>
</dbReference>
<dbReference type="InterPro" id="IPR023032">
    <property type="entry name" value="tRNA_MAMT_biosynth_bifunc_MnmC"/>
</dbReference>
<dbReference type="InterPro" id="IPR047785">
    <property type="entry name" value="tRNA_MNMC2"/>
</dbReference>
<dbReference type="InterPro" id="IPR017610">
    <property type="entry name" value="tRNA_S-uridine_synth_MnmC_C"/>
</dbReference>
<dbReference type="NCBIfam" id="TIGR03197">
    <property type="entry name" value="MnmC_Cterm"/>
    <property type="match status" value="1"/>
</dbReference>
<dbReference type="NCBIfam" id="NF002481">
    <property type="entry name" value="PRK01747.1-2"/>
    <property type="match status" value="1"/>
</dbReference>
<dbReference type="NCBIfam" id="NF002484">
    <property type="entry name" value="PRK01747.1-5"/>
    <property type="match status" value="1"/>
</dbReference>
<dbReference type="NCBIfam" id="NF033855">
    <property type="entry name" value="tRNA_MNMC2"/>
    <property type="match status" value="1"/>
</dbReference>
<dbReference type="PANTHER" id="PTHR13847">
    <property type="entry name" value="SARCOSINE DEHYDROGENASE-RELATED"/>
    <property type="match status" value="1"/>
</dbReference>
<dbReference type="PANTHER" id="PTHR13847:SF283">
    <property type="entry name" value="TRNA 5-METHYLAMINOMETHYL-2-THIOURIDINE BIOSYNTHESIS BIFUNCTIONAL PROTEIN MNMC"/>
    <property type="match status" value="1"/>
</dbReference>
<dbReference type="Pfam" id="PF01266">
    <property type="entry name" value="DAO"/>
    <property type="match status" value="1"/>
</dbReference>
<dbReference type="Pfam" id="PF05430">
    <property type="entry name" value="Methyltransf_30"/>
    <property type="match status" value="1"/>
</dbReference>
<dbReference type="SUPFAM" id="SSF51905">
    <property type="entry name" value="FAD/NAD(P)-binding domain"/>
    <property type="match status" value="1"/>
</dbReference>
<gene>
    <name evidence="1" type="primary">mnmC</name>
    <name type="ordered locus">APJL_0869</name>
</gene>
<reference key="1">
    <citation type="journal article" date="2008" name="PLoS ONE">
        <title>Genome biology of Actinobacillus pleuropneumoniae JL03, an isolate of serotype 3 prevalent in China.</title>
        <authorList>
            <person name="Xu Z."/>
            <person name="Zhou Y."/>
            <person name="Li L."/>
            <person name="Zhou R."/>
            <person name="Xiao S."/>
            <person name="Wan Y."/>
            <person name="Zhang S."/>
            <person name="Wang K."/>
            <person name="Li W."/>
            <person name="Li L."/>
            <person name="Jin H."/>
            <person name="Kang M."/>
            <person name="Dalai B."/>
            <person name="Li T."/>
            <person name="Liu L."/>
            <person name="Cheng Y."/>
            <person name="Zhang L."/>
            <person name="Xu T."/>
            <person name="Zheng H."/>
            <person name="Pu S."/>
            <person name="Wang B."/>
            <person name="Gu W."/>
            <person name="Zhang X.L."/>
            <person name="Zhu G.-F."/>
            <person name="Wang S."/>
            <person name="Zhao G.-P."/>
            <person name="Chen H."/>
        </authorList>
    </citation>
    <scope>NUCLEOTIDE SEQUENCE [LARGE SCALE GENOMIC DNA]</scope>
    <source>
        <strain>JL03</strain>
    </source>
</reference>
<keyword id="KW-0963">Cytoplasm</keyword>
<keyword id="KW-0274">FAD</keyword>
<keyword id="KW-0285">Flavoprotein</keyword>
<keyword id="KW-0489">Methyltransferase</keyword>
<keyword id="KW-0511">Multifunctional enzyme</keyword>
<keyword id="KW-0560">Oxidoreductase</keyword>
<keyword id="KW-0949">S-adenosyl-L-methionine</keyword>
<keyword id="KW-0808">Transferase</keyword>
<keyword id="KW-0819">tRNA processing</keyword>
<accession>B0BPE2</accession>
<name>MNMC_ACTPJ</name>
<feature type="chain" id="PRO_0000347937" description="tRNA 5-methylaminomethyl-2-thiouridine biosynthesis bifunctional protein MnmC">
    <location>
        <begin position="1"/>
        <end position="671"/>
    </location>
</feature>
<feature type="region of interest" description="tRNA (mnm(5)s(2)U34)-methyltransferase">
    <location>
        <begin position="1"/>
        <end position="245"/>
    </location>
</feature>
<feature type="region of interest" description="FAD-dependent cmnm(5)s(2)U34 oxidoreductase">
    <location>
        <begin position="272"/>
        <end position="671"/>
    </location>
</feature>
<protein>
    <recommendedName>
        <fullName evidence="1">tRNA 5-methylaminomethyl-2-thiouridine biosynthesis bifunctional protein MnmC</fullName>
        <shortName evidence="1">tRNA mnm(5)s(2)U biosynthesis bifunctional protein</shortName>
    </recommendedName>
    <domain>
        <recommendedName>
            <fullName evidence="1">tRNA (mnm(5)s(2)U34)-methyltransferase</fullName>
            <ecNumber evidence="1">2.1.1.61</ecNumber>
        </recommendedName>
    </domain>
    <domain>
        <recommendedName>
            <fullName evidence="1">FAD-dependent cmnm(5)s(2)U34 oxidoreductase</fullName>
            <ecNumber evidence="1">1.5.-.-</ecNumber>
        </recommendedName>
    </domain>
</protein>
<organism>
    <name type="scientific">Actinobacillus pleuropneumoniae serotype 3 (strain JL03)</name>
    <dbReference type="NCBI Taxonomy" id="434271"/>
    <lineage>
        <taxon>Bacteria</taxon>
        <taxon>Pseudomonadati</taxon>
        <taxon>Pseudomonadota</taxon>
        <taxon>Gammaproteobacteria</taxon>
        <taxon>Pasteurellales</taxon>
        <taxon>Pasteurellaceae</taxon>
        <taxon>Actinobacillus</taxon>
    </lineage>
</organism>
<evidence type="ECO:0000255" key="1">
    <source>
        <dbReference type="HAMAP-Rule" id="MF_01102"/>
    </source>
</evidence>
<sequence>MVNVMNTLSFASLSFNSNNTPVSEQFDDIYFSTQDGLEESYYVFQDGNQLWQKWQTHDVESFVIAETGFGTGLNFLAVADKFQQFLSEFPNSKLKRLYFISFEKFPLTSEQLATIHKNYPQFATLSQKMTACWQPRQTGCQRYHFEQIYLDVWFGDMLDNLPQLGDLYTNRIDAWFLDGFSPDKNPEMWNETLYRQMFSLTKNGGSFATFTAASTVRKGLQAVGFEVKKRKGFGKKREMLWGEKPQQSETAPVNYPYFYSESQTEANDIAVVGGGVASLFVVLSLLEKGKKVTLYCKDNALAQNASGNLQGAIYPQLSDDDERNIRFYVHCFDYALQRLSQIEPLVEFEHALTGVALYAYNDKTAKKLEKIARQTNDDSLFKLCSAAELSEKIGLKVPNGGAFMPQSGWLSPIQFVQGTFAYLQTKGLQIVLNHEVKDPQFSEGKWHWQHNGKTFSHQILVLANGHTLTQFQQAQGIPLYPVRGQVSQIPTTPALQQLKCVVCYDGYLTPVSKANTHCIGASHVRDKAETYFSLEEHHENVAKLQQNLTACDWTQGIDESQNLAKQGVRAALRDRVPMVGQMPNFSVQKVQYQNLYNQLRRKQAVENAANFANLYMVNGLASRGLTTAPLLGEMLASLICDEPLPISEDIWHVLSPNRTWIRKLLKGSKVE</sequence>